<evidence type="ECO:0000250" key="1"/>
<evidence type="ECO:0000255" key="2">
    <source>
        <dbReference type="PROSITE-ProRule" id="PRU00084"/>
    </source>
</evidence>
<evidence type="ECO:0000255" key="3">
    <source>
        <dbReference type="PROSITE-ProRule" id="PRU00159"/>
    </source>
</evidence>
<evidence type="ECO:0000255" key="4">
    <source>
        <dbReference type="PROSITE-ProRule" id="PRU10028"/>
    </source>
</evidence>
<evidence type="ECO:0000256" key="5">
    <source>
        <dbReference type="SAM" id="MobiDB-lite"/>
    </source>
</evidence>
<evidence type="ECO:0000269" key="6">
    <source>
    </source>
</evidence>
<evidence type="ECO:0000269" key="7">
    <source>
    </source>
</evidence>
<evidence type="ECO:0000269" key="8">
    <source>
    </source>
</evidence>
<evidence type="ECO:0000305" key="9"/>
<sequence length="1177" mass="135062">MALANGGEDRMDDSSSGRTSLADSASLTNSSLRSGTSSQSIHTNDGTIRVFNFTTGEFERFHPNMLCEEICNTMCRQLGIAPIAQLLYGIREHSTSRRPSPLVRLDLTWCLPGERLNCQLVYCFRMRFRVPELDSQLELIDGRSHKFLYRQMRYDMRTEQIPEIRYPEHKDKSTGLAVMDMLIDDQEQSEDQQAMRSIEKLYKLYLPPSLWRAHSFFVGSKIREVFRSLKANSLSVERLKWHYVHQVSHLAPTYMTEQFTCTVQYLPNEEVARGSGPIGTSLAHSTSTLASSGSTNTLSTLTTNTNSVALGGSGKKAKRRSTSGGIDVYVRVFPHDSLEPGLKVARVTSEATLKWILVGAVEGIFMISKINDTSVRLEIVGLPKGYEMQFQTEKEMKSFISYLGIYIRLSSKWMQDLCHSYRTPSLEELSSLHCHGPIGGAYSLMKLHENGDKCGSYIVRECDREYNIYYIDINTKIMAKKTDQERCKTETFRIVRKDSQWKLSYNNGEHVLNSLHEVAHIIQADSPDRYRIPASKYDKPPLLLLLLPKNLKAKKTDLQLSEAELQRRNPQIFNPRTDLQWYPDSISLSDDGMMFTMRGDWIQQSPVKDVSVTMKMLKSDGNFMEFFRLAQTWSLIQSPQFLKLYGLTLADPYTMVMEYSRYGPLNKFLHSMPNVTLHCLLDLMHGLVRGMHYLEDNKIIHNYIRCSNLYVTKYDPNSYVLDAKISDPGYPRPYRESDSPWIPVKYYRNLQAAKTDQFAQLWAFATTIYEIFSRCKEDLSTLRQEQLLRQKNLDGNILKMLDQDICPAPIFETIMDGWSDDETKRFSHHDIFSRLNTIKAEILPNYMPPPEIATNGTGDETVIDRSDIPFLPFPRSNMLMVIPLTSECRVIYNMENMIGRGHYGTVYKGHLEFNDKDQPREQVAIKMLNTMQVSTDFHREIGIMRTLSHPNIVKFKYWAEKSHCIIMEYLQSGSFDIYLRFTAPNLNNPRLVSFALDIANGMKYLSDMGLIHRDLAARNILVDHNGDGDCVKISDFGLAQFANSDGYYYAKSKRDIPIRWYSPEAISTCRFSSYSDVWSYGVTLFEMFSRGEEPNLVPIQTSQEDFLNRLQSGERLNRPASCPDFIYDLMQLCWHATPRSRPSFATIVDIITREVATKVTHPTDGHQSPPNQPTDAE</sequence>
<name>JAK_DROME</name>
<accession>Q24592</accession>
<accession>Q712V3</accession>
<accession>Q8SZI9</accession>
<accession>Q9VYZ7</accession>
<dbReference type="EC" id="2.7.10.2"/>
<dbReference type="EMBL" id="L26975">
    <property type="protein sequence ID" value="AAA62441.1"/>
    <property type="molecule type" value="mRNA"/>
</dbReference>
<dbReference type="EMBL" id="AE014298">
    <property type="protein sequence ID" value="AAF48035.1"/>
    <property type="molecule type" value="Genomic_DNA"/>
</dbReference>
<dbReference type="EMBL" id="BT006331">
    <property type="protein sequence ID" value="AAP20030.1"/>
    <property type="molecule type" value="mRNA"/>
</dbReference>
<dbReference type="EMBL" id="AY070869">
    <property type="protein sequence ID" value="AAL48491.1"/>
    <property type="status" value="ALT_INIT"/>
    <property type="molecule type" value="mRNA"/>
</dbReference>
<dbReference type="EMBL" id="AJ002915">
    <property type="protein sequence ID" value="CAA05750.1"/>
    <property type="molecule type" value="Genomic_DNA"/>
</dbReference>
<dbReference type="PIR" id="A36984">
    <property type="entry name" value="A36984"/>
</dbReference>
<dbReference type="RefSeq" id="NP_511119.2">
    <property type="nucleotide sequence ID" value="NM_078564.3"/>
</dbReference>
<dbReference type="SMR" id="Q24592"/>
<dbReference type="BioGRID" id="58492">
    <property type="interactions" value="43"/>
</dbReference>
<dbReference type="DIP" id="DIP-61595N"/>
<dbReference type="FunCoup" id="Q24592">
    <property type="interactions" value="666"/>
</dbReference>
<dbReference type="IntAct" id="Q24592">
    <property type="interactions" value="9"/>
</dbReference>
<dbReference type="STRING" id="7227.FBpp0073313"/>
<dbReference type="iPTMnet" id="Q24592"/>
<dbReference type="PaxDb" id="7227-FBpp0073313"/>
<dbReference type="DNASU" id="32080"/>
<dbReference type="EnsemblMetazoa" id="FBtr0073457">
    <property type="protein sequence ID" value="FBpp0073313"/>
    <property type="gene ID" value="FBgn0004864"/>
</dbReference>
<dbReference type="GeneID" id="32080"/>
<dbReference type="KEGG" id="dme:Dmel_CG1594"/>
<dbReference type="AGR" id="FB:FBgn0004864"/>
<dbReference type="CTD" id="32080"/>
<dbReference type="FlyBase" id="FBgn0004864">
    <property type="gene designation" value="hop"/>
</dbReference>
<dbReference type="VEuPathDB" id="VectorBase:FBgn0004864"/>
<dbReference type="eggNOG" id="KOG0197">
    <property type="taxonomic scope" value="Eukaryota"/>
</dbReference>
<dbReference type="HOGENOM" id="CLU_008155_2_1_1"/>
<dbReference type="InParanoid" id="Q24592"/>
<dbReference type="OMA" id="FLPRCMR"/>
<dbReference type="OrthoDB" id="1915767at2759"/>
<dbReference type="PhylomeDB" id="Q24592"/>
<dbReference type="BRENDA" id="2.7.10.2">
    <property type="organism ID" value="1994"/>
</dbReference>
<dbReference type="Reactome" id="R-DME-1169408">
    <property type="pathway name" value="ISG15 antiviral mechanism"/>
</dbReference>
<dbReference type="Reactome" id="R-DME-1266695">
    <property type="pathway name" value="Interleukin-7 signaling"/>
</dbReference>
<dbReference type="Reactome" id="R-DME-1433557">
    <property type="pathway name" value="Signaling by SCF-KIT"/>
</dbReference>
<dbReference type="Reactome" id="R-DME-209209">
    <property type="pathway name" value="Formation of the activated receptor complex"/>
</dbReference>
<dbReference type="Reactome" id="R-DME-209228">
    <property type="pathway name" value="Formation of the activated STAT92E dimer and transport to the nucleus"/>
</dbReference>
<dbReference type="Reactome" id="R-DME-210688">
    <property type="pathway name" value="Dephosphorylation by PTP61F phosphatases"/>
</dbReference>
<dbReference type="Reactome" id="R-DME-5673000">
    <property type="pathway name" value="RAF activation"/>
</dbReference>
<dbReference type="Reactome" id="R-DME-6785807">
    <property type="pathway name" value="Interleukin-4 and Interleukin-13 signaling"/>
</dbReference>
<dbReference type="Reactome" id="R-DME-69231">
    <property type="pathway name" value="Cyclin D associated events in G1"/>
</dbReference>
<dbReference type="Reactome" id="R-DME-8985947">
    <property type="pathway name" value="Interleukin-9 signaling"/>
</dbReference>
<dbReference type="Reactome" id="R-DME-9006335">
    <property type="pathway name" value="Signaling by Erythropoietin"/>
</dbReference>
<dbReference type="Reactome" id="R-DME-9020558">
    <property type="pathway name" value="Interleukin-2 signaling"/>
</dbReference>
<dbReference type="Reactome" id="R-DME-9027276">
    <property type="pathway name" value="Erythropoietin activates Phosphoinositide-3-kinase (PI3K)"/>
</dbReference>
<dbReference type="Reactome" id="R-DME-9027284">
    <property type="pathway name" value="Erythropoietin activates RAS"/>
</dbReference>
<dbReference type="Reactome" id="R-DME-9674555">
    <property type="pathway name" value="Signaling by CSF3 (G-CSF)"/>
</dbReference>
<dbReference type="Reactome" id="R-DME-9705462">
    <property type="pathway name" value="Inactivation of CSF3 (G-CSF) signaling"/>
</dbReference>
<dbReference type="Reactome" id="R-DME-983231">
    <property type="pathway name" value="Factors involved in megakaryocyte development and platelet production"/>
</dbReference>
<dbReference type="SignaLink" id="Q24592"/>
<dbReference type="BioGRID-ORCS" id="32080">
    <property type="hits" value="1 hit in 3 CRISPR screens"/>
</dbReference>
<dbReference type="GenomeRNAi" id="32080"/>
<dbReference type="PRO" id="PR:Q24592"/>
<dbReference type="Proteomes" id="UP000000803">
    <property type="component" value="Chromosome X"/>
</dbReference>
<dbReference type="Bgee" id="FBgn0004864">
    <property type="expression patterns" value="Expressed in interfollicle cell in ovary and 119 other cell types or tissues"/>
</dbReference>
<dbReference type="ExpressionAtlas" id="Q24592">
    <property type="expression patterns" value="baseline and differential"/>
</dbReference>
<dbReference type="GO" id="GO:0009898">
    <property type="term" value="C:cytoplasmic side of plasma membrane"/>
    <property type="evidence" value="ECO:0000314"/>
    <property type="project" value="FlyBase"/>
</dbReference>
<dbReference type="GO" id="GO:0005856">
    <property type="term" value="C:cytoskeleton"/>
    <property type="evidence" value="ECO:0007669"/>
    <property type="project" value="InterPro"/>
</dbReference>
<dbReference type="GO" id="GO:0005829">
    <property type="term" value="C:cytosol"/>
    <property type="evidence" value="ECO:0000314"/>
    <property type="project" value="FlyBase"/>
</dbReference>
<dbReference type="GO" id="GO:0012505">
    <property type="term" value="C:endomembrane system"/>
    <property type="evidence" value="ECO:0007669"/>
    <property type="project" value="UniProtKB-SubCell"/>
</dbReference>
<dbReference type="GO" id="GO:0005524">
    <property type="term" value="F:ATP binding"/>
    <property type="evidence" value="ECO:0007669"/>
    <property type="project" value="UniProtKB-KW"/>
</dbReference>
<dbReference type="GO" id="GO:0005126">
    <property type="term" value="F:cytokine receptor binding"/>
    <property type="evidence" value="ECO:0000353"/>
    <property type="project" value="FlyBase"/>
</dbReference>
<dbReference type="GO" id="GO:0004715">
    <property type="term" value="F:non-membrane spanning protein tyrosine kinase activity"/>
    <property type="evidence" value="ECO:0000314"/>
    <property type="project" value="FlyBase"/>
</dbReference>
<dbReference type="GO" id="GO:0004713">
    <property type="term" value="F:protein tyrosine kinase activity"/>
    <property type="evidence" value="ECO:0000304"/>
    <property type="project" value="Reactome"/>
</dbReference>
<dbReference type="GO" id="GO:0007350">
    <property type="term" value="P:blastoderm segmentation"/>
    <property type="evidence" value="ECO:0000315"/>
    <property type="project" value="FlyBase"/>
</dbReference>
<dbReference type="GO" id="GO:0007298">
    <property type="term" value="P:border follicle cell migration"/>
    <property type="evidence" value="ECO:0000315"/>
    <property type="project" value="FlyBase"/>
</dbReference>
<dbReference type="GO" id="GO:0030154">
    <property type="term" value="P:cell differentiation"/>
    <property type="evidence" value="ECO:0000318"/>
    <property type="project" value="GO_Central"/>
</dbReference>
<dbReference type="GO" id="GO:0007259">
    <property type="term" value="P:cell surface receptor signaling pathway via JAK-STAT"/>
    <property type="evidence" value="ECO:0000314"/>
    <property type="project" value="FlyBase"/>
</dbReference>
<dbReference type="GO" id="GO:0048749">
    <property type="term" value="P:compound eye development"/>
    <property type="evidence" value="ECO:0000315"/>
    <property type="project" value="FlyBase"/>
</dbReference>
<dbReference type="GO" id="GO:0001745">
    <property type="term" value="P:compound eye morphogenesis"/>
    <property type="evidence" value="ECO:0000315"/>
    <property type="project" value="FlyBase"/>
</dbReference>
<dbReference type="GO" id="GO:0001751">
    <property type="term" value="P:compound eye photoreceptor cell differentiation"/>
    <property type="evidence" value="ECO:0000315"/>
    <property type="project" value="FlyBase"/>
</dbReference>
<dbReference type="GO" id="GO:0019221">
    <property type="term" value="P:cytokine-mediated signaling pathway"/>
    <property type="evidence" value="ECO:0000318"/>
    <property type="project" value="GO_Central"/>
</dbReference>
<dbReference type="GO" id="GO:0051607">
    <property type="term" value="P:defense response to virus"/>
    <property type="evidence" value="ECO:0000315"/>
    <property type="project" value="FlyBase"/>
</dbReference>
<dbReference type="GO" id="GO:0071907">
    <property type="term" value="P:determination of digestive tract left/right asymmetry"/>
    <property type="evidence" value="ECO:0000315"/>
    <property type="project" value="FlyBase"/>
</dbReference>
<dbReference type="GO" id="GO:0045317">
    <property type="term" value="P:equator specification"/>
    <property type="evidence" value="ECO:0000315"/>
    <property type="project" value="FlyBase"/>
</dbReference>
<dbReference type="GO" id="GO:0042067">
    <property type="term" value="P:establishment of ommatidial planar polarity"/>
    <property type="evidence" value="ECO:0000315"/>
    <property type="project" value="FlyBase"/>
</dbReference>
<dbReference type="GO" id="GO:0007455">
    <property type="term" value="P:eye-antennal disc morphogenesis"/>
    <property type="evidence" value="ECO:0000315"/>
    <property type="project" value="FlyBase"/>
</dbReference>
<dbReference type="GO" id="GO:0030707">
    <property type="term" value="P:follicle cell of egg chamber development"/>
    <property type="evidence" value="ECO:0000315"/>
    <property type="project" value="FlyBase"/>
</dbReference>
<dbReference type="GO" id="GO:0030713">
    <property type="term" value="P:follicle cell of egg chamber stalk formation"/>
    <property type="evidence" value="ECO:0000315"/>
    <property type="project" value="FlyBase"/>
</dbReference>
<dbReference type="GO" id="GO:0007481">
    <property type="term" value="P:haltere disc morphogenesis"/>
    <property type="evidence" value="ECO:0000315"/>
    <property type="project" value="FlyBase"/>
</dbReference>
<dbReference type="GO" id="GO:0042386">
    <property type="term" value="P:hemocyte differentiation"/>
    <property type="evidence" value="ECO:0000315"/>
    <property type="project" value="FlyBase"/>
</dbReference>
<dbReference type="GO" id="GO:0007442">
    <property type="term" value="P:hindgut morphogenesis"/>
    <property type="evidence" value="ECO:0000315"/>
    <property type="project" value="FlyBase"/>
</dbReference>
<dbReference type="GO" id="GO:0035556">
    <property type="term" value="P:intracellular signal transduction"/>
    <property type="evidence" value="ECO:0000318"/>
    <property type="project" value="GO_Central"/>
</dbReference>
<dbReference type="GO" id="GO:0035167">
    <property type="term" value="P:larval lymph gland hemopoiesis"/>
    <property type="evidence" value="ECO:0000315"/>
    <property type="project" value="FlyBase"/>
</dbReference>
<dbReference type="GO" id="GO:0007478">
    <property type="term" value="P:leg disc morphogenesis"/>
    <property type="evidence" value="ECO:0000315"/>
    <property type="project" value="FlyBase"/>
</dbReference>
<dbReference type="GO" id="GO:0045475">
    <property type="term" value="P:locomotor rhythm"/>
    <property type="evidence" value="ECO:0000315"/>
    <property type="project" value="FlyBase"/>
</dbReference>
<dbReference type="GO" id="GO:0007616">
    <property type="term" value="P:long-term memory"/>
    <property type="evidence" value="ECO:0000315"/>
    <property type="project" value="FlyBase"/>
</dbReference>
<dbReference type="GO" id="GO:0019100">
    <property type="term" value="P:male germ-line sex determination"/>
    <property type="evidence" value="ECO:0000315"/>
    <property type="project" value="FlyBase"/>
</dbReference>
<dbReference type="GO" id="GO:0060031">
    <property type="term" value="P:mediolateral intercalation"/>
    <property type="evidence" value="ECO:0000315"/>
    <property type="project" value="FlyBase"/>
</dbReference>
<dbReference type="GO" id="GO:0007399">
    <property type="term" value="P:nervous system development"/>
    <property type="evidence" value="ECO:0000315"/>
    <property type="project" value="FlyBase"/>
</dbReference>
<dbReference type="GO" id="GO:0016318">
    <property type="term" value="P:ommatidial rotation"/>
    <property type="evidence" value="ECO:0000315"/>
    <property type="project" value="FlyBase"/>
</dbReference>
<dbReference type="GO" id="GO:0007424">
    <property type="term" value="P:open tracheal system development"/>
    <property type="evidence" value="ECO:0000315"/>
    <property type="project" value="FlyBase"/>
</dbReference>
<dbReference type="GO" id="GO:0007365">
    <property type="term" value="P:periodic partitioning"/>
    <property type="evidence" value="ECO:0000315"/>
    <property type="project" value="FlyBase"/>
</dbReference>
<dbReference type="GO" id="GO:0031453">
    <property type="term" value="P:positive regulation of heterochromatin formation"/>
    <property type="evidence" value="ECO:0000315"/>
    <property type="project" value="FlyBase"/>
</dbReference>
<dbReference type="GO" id="GO:0007538">
    <property type="term" value="P:primary sex determination"/>
    <property type="evidence" value="ECO:0000315"/>
    <property type="project" value="FlyBase"/>
</dbReference>
<dbReference type="GO" id="GO:0016476">
    <property type="term" value="P:regulation of embryonic cell shape"/>
    <property type="evidence" value="ECO:0000315"/>
    <property type="project" value="FlyBase"/>
</dbReference>
<dbReference type="GO" id="GO:0035206">
    <property type="term" value="P:regulation of hemocyte proliferation"/>
    <property type="evidence" value="ECO:0000315"/>
    <property type="project" value="FlyBase"/>
</dbReference>
<dbReference type="GO" id="GO:0019827">
    <property type="term" value="P:stem cell population maintenance"/>
    <property type="evidence" value="ECO:0000315"/>
    <property type="project" value="FlyBase"/>
</dbReference>
<dbReference type="GO" id="GO:0007472">
    <property type="term" value="P:wing disc morphogenesis"/>
    <property type="evidence" value="ECO:0000315"/>
    <property type="project" value="FlyBase"/>
</dbReference>
<dbReference type="CDD" id="cd05037">
    <property type="entry name" value="PTK_Jak_rpt1"/>
    <property type="match status" value="1"/>
</dbReference>
<dbReference type="CDD" id="cd05038">
    <property type="entry name" value="PTKc_Jak_rpt2"/>
    <property type="match status" value="1"/>
</dbReference>
<dbReference type="CDD" id="cd09921">
    <property type="entry name" value="SH2_Jak_family"/>
    <property type="match status" value="1"/>
</dbReference>
<dbReference type="FunFam" id="1.10.510.10:FF:001512">
    <property type="entry name" value="Receptor tyrosine-protein kinase erbB-2"/>
    <property type="match status" value="1"/>
</dbReference>
<dbReference type="FunFam" id="1.10.510.10:FF:001855">
    <property type="entry name" value="Tyrosine-protein kinase hopscotch"/>
    <property type="match status" value="1"/>
</dbReference>
<dbReference type="Gene3D" id="1.10.510.10">
    <property type="entry name" value="Transferase(Phosphotransferase) domain 1"/>
    <property type="match status" value="2"/>
</dbReference>
<dbReference type="InterPro" id="IPR019749">
    <property type="entry name" value="Band_41_domain"/>
</dbReference>
<dbReference type="InterPro" id="IPR000299">
    <property type="entry name" value="FERM_domain"/>
</dbReference>
<dbReference type="InterPro" id="IPR051286">
    <property type="entry name" value="JAK"/>
</dbReference>
<dbReference type="InterPro" id="IPR011009">
    <property type="entry name" value="Kinase-like_dom_sf"/>
</dbReference>
<dbReference type="InterPro" id="IPR000719">
    <property type="entry name" value="Prot_kinase_dom"/>
</dbReference>
<dbReference type="InterPro" id="IPR017441">
    <property type="entry name" value="Protein_kinase_ATP_BS"/>
</dbReference>
<dbReference type="InterPro" id="IPR001245">
    <property type="entry name" value="Ser-Thr/Tyr_kinase_cat_dom"/>
</dbReference>
<dbReference type="InterPro" id="IPR000980">
    <property type="entry name" value="SH2"/>
</dbReference>
<dbReference type="InterPro" id="IPR036860">
    <property type="entry name" value="SH2_dom_sf"/>
</dbReference>
<dbReference type="InterPro" id="IPR008266">
    <property type="entry name" value="Tyr_kinase_AS"/>
</dbReference>
<dbReference type="InterPro" id="IPR020635">
    <property type="entry name" value="Tyr_kinase_cat_dom"/>
</dbReference>
<dbReference type="PANTHER" id="PTHR45807">
    <property type="entry name" value="TYROSINE-PROTEIN KINASE HOPSCOTCH"/>
    <property type="match status" value="1"/>
</dbReference>
<dbReference type="PANTHER" id="PTHR45807:SF7">
    <property type="entry name" value="TYROSINE-PROTEIN KINASE HOPSCOTCH"/>
    <property type="match status" value="1"/>
</dbReference>
<dbReference type="Pfam" id="PF07714">
    <property type="entry name" value="PK_Tyr_Ser-Thr"/>
    <property type="match status" value="2"/>
</dbReference>
<dbReference type="Pfam" id="PF21990">
    <property type="entry name" value="SH2_1"/>
    <property type="match status" value="1"/>
</dbReference>
<dbReference type="PRINTS" id="PR00109">
    <property type="entry name" value="TYRKINASE"/>
</dbReference>
<dbReference type="SMART" id="SM00295">
    <property type="entry name" value="B41"/>
    <property type="match status" value="1"/>
</dbReference>
<dbReference type="SMART" id="SM00219">
    <property type="entry name" value="TyrKc"/>
    <property type="match status" value="1"/>
</dbReference>
<dbReference type="SUPFAM" id="SSF56112">
    <property type="entry name" value="Protein kinase-like (PK-like)"/>
    <property type="match status" value="2"/>
</dbReference>
<dbReference type="SUPFAM" id="SSF55550">
    <property type="entry name" value="SH2 domain"/>
    <property type="match status" value="1"/>
</dbReference>
<dbReference type="PROSITE" id="PS50057">
    <property type="entry name" value="FERM_3"/>
    <property type="match status" value="1"/>
</dbReference>
<dbReference type="PROSITE" id="PS00107">
    <property type="entry name" value="PROTEIN_KINASE_ATP"/>
    <property type="match status" value="1"/>
</dbReference>
<dbReference type="PROSITE" id="PS50011">
    <property type="entry name" value="PROTEIN_KINASE_DOM"/>
    <property type="match status" value="2"/>
</dbReference>
<dbReference type="PROSITE" id="PS00109">
    <property type="entry name" value="PROTEIN_KINASE_TYR"/>
    <property type="match status" value="1"/>
</dbReference>
<keyword id="KW-0067">ATP-binding</keyword>
<keyword id="KW-0217">Developmental protein</keyword>
<keyword id="KW-0418">Kinase</keyword>
<keyword id="KW-0472">Membrane</keyword>
<keyword id="KW-0547">Nucleotide-binding</keyword>
<keyword id="KW-0597">Phosphoprotein</keyword>
<keyword id="KW-1185">Reference proteome</keyword>
<keyword id="KW-0677">Repeat</keyword>
<keyword id="KW-0727">SH2 domain</keyword>
<keyword id="KW-0804">Transcription</keyword>
<keyword id="KW-0805">Transcription regulation</keyword>
<keyword id="KW-0808">Transferase</keyword>
<keyword id="KW-0829">Tyrosine-protein kinase</keyword>
<comment type="function">
    <text evidence="7 8">Tyrosine kinase of the non-receptor type, phosphorylates the marelle protein. Required maternally for the establishment of the normal array of embryonic segments: involved in the control of pair-rule gene transcription in a stripe-specific manner. Together with Hsp83 and piwi, mediates canalization, also known as developmental robustness, likely via epigenetic silencing of existing genetic variants and suppression of transposon-induced new genetic variation.</text>
</comment>
<comment type="catalytic activity">
    <reaction evidence="4">
        <text>L-tyrosyl-[protein] + ATP = O-phospho-L-tyrosyl-[protein] + ADP + H(+)</text>
        <dbReference type="Rhea" id="RHEA:10596"/>
        <dbReference type="Rhea" id="RHEA-COMP:10136"/>
        <dbReference type="Rhea" id="RHEA-COMP:20101"/>
        <dbReference type="ChEBI" id="CHEBI:15378"/>
        <dbReference type="ChEBI" id="CHEBI:30616"/>
        <dbReference type="ChEBI" id="CHEBI:46858"/>
        <dbReference type="ChEBI" id="CHEBI:61978"/>
        <dbReference type="ChEBI" id="CHEBI:456216"/>
        <dbReference type="EC" id="2.7.10.2"/>
    </reaction>
</comment>
<comment type="subunit">
    <text>Forms a complex with Hsp83 and piwi; probably Hop mediates the interaction between piwi and Hsp83.</text>
</comment>
<comment type="subcellular location">
    <subcellularLocation>
        <location evidence="1">Endomembrane system</location>
        <topology evidence="1">Peripheral membrane protein</topology>
    </subcellularLocation>
    <text evidence="1">Wholly intracellular, possibly membrane associated.</text>
</comment>
<comment type="developmental stage">
    <text evidence="8">Expressed both maternally and zygotically throughout development.</text>
</comment>
<comment type="domain">
    <text evidence="1">Possesses two phosphotransferase domains. The second one probably contains the catalytic domain (By similarity), while the presence of slight differences suggest a different role for domain 1 (By similarity).</text>
</comment>
<comment type="similarity">
    <text evidence="3">Belongs to the protein kinase superfamily. Tyr protein kinase family. JAK subfamily.</text>
</comment>
<comment type="sequence caution" evidence="9">
    <conflict type="erroneous initiation">
        <sequence resource="EMBL-CDS" id="AAL48491"/>
    </conflict>
</comment>
<protein>
    <recommendedName>
        <fullName>Tyrosine-protein kinase hopscotch</fullName>
        <ecNumber>2.7.10.2</ecNumber>
    </recommendedName>
</protein>
<organism>
    <name type="scientific">Drosophila melanogaster</name>
    <name type="common">Fruit fly</name>
    <dbReference type="NCBI Taxonomy" id="7227"/>
    <lineage>
        <taxon>Eukaryota</taxon>
        <taxon>Metazoa</taxon>
        <taxon>Ecdysozoa</taxon>
        <taxon>Arthropoda</taxon>
        <taxon>Hexapoda</taxon>
        <taxon>Insecta</taxon>
        <taxon>Pterygota</taxon>
        <taxon>Neoptera</taxon>
        <taxon>Endopterygota</taxon>
        <taxon>Diptera</taxon>
        <taxon>Brachycera</taxon>
        <taxon>Muscomorpha</taxon>
        <taxon>Ephydroidea</taxon>
        <taxon>Drosophilidae</taxon>
        <taxon>Drosophila</taxon>
        <taxon>Sophophora</taxon>
    </lineage>
</organism>
<proteinExistence type="evidence at protein level"/>
<reference key="1">
    <citation type="journal article" date="1994" name="Genes Dev.">
        <title>Stripe-specific regulation of pair-rule genes by hopscotch, a putative Jak family tyrosine kinase in Drosophila.</title>
        <authorList>
            <person name="Binari R."/>
            <person name="Perrimon N."/>
        </authorList>
    </citation>
    <scope>NUCLEOTIDE SEQUENCE [MRNA]</scope>
    <scope>FUNCTION</scope>
    <scope>DEVELOPMENTAL STAGE</scope>
</reference>
<reference key="2">
    <citation type="journal article" date="2000" name="Science">
        <title>The genome sequence of Drosophila melanogaster.</title>
        <authorList>
            <person name="Adams M.D."/>
            <person name="Celniker S.E."/>
            <person name="Holt R.A."/>
            <person name="Evans C.A."/>
            <person name="Gocayne J.D."/>
            <person name="Amanatides P.G."/>
            <person name="Scherer S.E."/>
            <person name="Li P.W."/>
            <person name="Hoskins R.A."/>
            <person name="Galle R.F."/>
            <person name="George R.A."/>
            <person name="Lewis S.E."/>
            <person name="Richards S."/>
            <person name="Ashburner M."/>
            <person name="Henderson S.N."/>
            <person name="Sutton G.G."/>
            <person name="Wortman J.R."/>
            <person name="Yandell M.D."/>
            <person name="Zhang Q."/>
            <person name="Chen L.X."/>
            <person name="Brandon R.C."/>
            <person name="Rogers Y.-H.C."/>
            <person name="Blazej R.G."/>
            <person name="Champe M."/>
            <person name="Pfeiffer B.D."/>
            <person name="Wan K.H."/>
            <person name="Doyle C."/>
            <person name="Baxter E.G."/>
            <person name="Helt G."/>
            <person name="Nelson C.R."/>
            <person name="Miklos G.L.G."/>
            <person name="Abril J.F."/>
            <person name="Agbayani A."/>
            <person name="An H.-J."/>
            <person name="Andrews-Pfannkoch C."/>
            <person name="Baldwin D."/>
            <person name="Ballew R.M."/>
            <person name="Basu A."/>
            <person name="Baxendale J."/>
            <person name="Bayraktaroglu L."/>
            <person name="Beasley E.M."/>
            <person name="Beeson K.Y."/>
            <person name="Benos P.V."/>
            <person name="Berman B.P."/>
            <person name="Bhandari D."/>
            <person name="Bolshakov S."/>
            <person name="Borkova D."/>
            <person name="Botchan M.R."/>
            <person name="Bouck J."/>
            <person name="Brokstein P."/>
            <person name="Brottier P."/>
            <person name="Burtis K.C."/>
            <person name="Busam D.A."/>
            <person name="Butler H."/>
            <person name="Cadieu E."/>
            <person name="Center A."/>
            <person name="Chandra I."/>
            <person name="Cherry J.M."/>
            <person name="Cawley S."/>
            <person name="Dahlke C."/>
            <person name="Davenport L.B."/>
            <person name="Davies P."/>
            <person name="de Pablos B."/>
            <person name="Delcher A."/>
            <person name="Deng Z."/>
            <person name="Mays A.D."/>
            <person name="Dew I."/>
            <person name="Dietz S.M."/>
            <person name="Dodson K."/>
            <person name="Doup L.E."/>
            <person name="Downes M."/>
            <person name="Dugan-Rocha S."/>
            <person name="Dunkov B.C."/>
            <person name="Dunn P."/>
            <person name="Durbin K.J."/>
            <person name="Evangelista C.C."/>
            <person name="Ferraz C."/>
            <person name="Ferriera S."/>
            <person name="Fleischmann W."/>
            <person name="Fosler C."/>
            <person name="Gabrielian A.E."/>
            <person name="Garg N.S."/>
            <person name="Gelbart W.M."/>
            <person name="Glasser K."/>
            <person name="Glodek A."/>
            <person name="Gong F."/>
            <person name="Gorrell J.H."/>
            <person name="Gu Z."/>
            <person name="Guan P."/>
            <person name="Harris M."/>
            <person name="Harris N.L."/>
            <person name="Harvey D.A."/>
            <person name="Heiman T.J."/>
            <person name="Hernandez J.R."/>
            <person name="Houck J."/>
            <person name="Hostin D."/>
            <person name="Houston K.A."/>
            <person name="Howland T.J."/>
            <person name="Wei M.-H."/>
            <person name="Ibegwam C."/>
            <person name="Jalali M."/>
            <person name="Kalush F."/>
            <person name="Karpen G.H."/>
            <person name="Ke Z."/>
            <person name="Kennison J.A."/>
            <person name="Ketchum K.A."/>
            <person name="Kimmel B.E."/>
            <person name="Kodira C.D."/>
            <person name="Kraft C.L."/>
            <person name="Kravitz S."/>
            <person name="Kulp D."/>
            <person name="Lai Z."/>
            <person name="Lasko P."/>
            <person name="Lei Y."/>
            <person name="Levitsky A.A."/>
            <person name="Li J.H."/>
            <person name="Li Z."/>
            <person name="Liang Y."/>
            <person name="Lin X."/>
            <person name="Liu X."/>
            <person name="Mattei B."/>
            <person name="McIntosh T.C."/>
            <person name="McLeod M.P."/>
            <person name="McPherson D."/>
            <person name="Merkulov G."/>
            <person name="Milshina N.V."/>
            <person name="Mobarry C."/>
            <person name="Morris J."/>
            <person name="Moshrefi A."/>
            <person name="Mount S.M."/>
            <person name="Moy M."/>
            <person name="Murphy B."/>
            <person name="Murphy L."/>
            <person name="Muzny D.M."/>
            <person name="Nelson D.L."/>
            <person name="Nelson D.R."/>
            <person name="Nelson K.A."/>
            <person name="Nixon K."/>
            <person name="Nusskern D.R."/>
            <person name="Pacleb J.M."/>
            <person name="Palazzolo M."/>
            <person name="Pittman G.S."/>
            <person name="Pan S."/>
            <person name="Pollard J."/>
            <person name="Puri V."/>
            <person name="Reese M.G."/>
            <person name="Reinert K."/>
            <person name="Remington K."/>
            <person name="Saunders R.D.C."/>
            <person name="Scheeler F."/>
            <person name="Shen H."/>
            <person name="Shue B.C."/>
            <person name="Siden-Kiamos I."/>
            <person name="Simpson M."/>
            <person name="Skupski M.P."/>
            <person name="Smith T.J."/>
            <person name="Spier E."/>
            <person name="Spradling A.C."/>
            <person name="Stapleton M."/>
            <person name="Strong R."/>
            <person name="Sun E."/>
            <person name="Svirskas R."/>
            <person name="Tector C."/>
            <person name="Turner R."/>
            <person name="Venter E."/>
            <person name="Wang A.H."/>
            <person name="Wang X."/>
            <person name="Wang Z.-Y."/>
            <person name="Wassarman D.A."/>
            <person name="Weinstock G.M."/>
            <person name="Weissenbach J."/>
            <person name="Williams S.M."/>
            <person name="Woodage T."/>
            <person name="Worley K.C."/>
            <person name="Wu D."/>
            <person name="Yang S."/>
            <person name="Yao Q.A."/>
            <person name="Ye J."/>
            <person name="Yeh R.-F."/>
            <person name="Zaveri J.S."/>
            <person name="Zhan M."/>
            <person name="Zhang G."/>
            <person name="Zhao Q."/>
            <person name="Zheng L."/>
            <person name="Zheng X.H."/>
            <person name="Zhong F.N."/>
            <person name="Zhong W."/>
            <person name="Zhou X."/>
            <person name="Zhu S.C."/>
            <person name="Zhu X."/>
            <person name="Smith H.O."/>
            <person name="Gibbs R.A."/>
            <person name="Myers E.W."/>
            <person name="Rubin G.M."/>
            <person name="Venter J.C."/>
        </authorList>
    </citation>
    <scope>NUCLEOTIDE SEQUENCE [LARGE SCALE GENOMIC DNA]</scope>
    <source>
        <strain>Berkeley</strain>
    </source>
</reference>
<reference key="3">
    <citation type="journal article" date="2002" name="Genome Biol.">
        <title>Annotation of the Drosophila melanogaster euchromatic genome: a systematic review.</title>
        <authorList>
            <person name="Misra S."/>
            <person name="Crosby M.A."/>
            <person name="Mungall C.J."/>
            <person name="Matthews B.B."/>
            <person name="Campbell K.S."/>
            <person name="Hradecky P."/>
            <person name="Huang Y."/>
            <person name="Kaminker J.S."/>
            <person name="Millburn G.H."/>
            <person name="Prochnik S.E."/>
            <person name="Smith C.D."/>
            <person name="Tupy J.L."/>
            <person name="Whitfield E.J."/>
            <person name="Bayraktaroglu L."/>
            <person name="Berman B.P."/>
            <person name="Bettencourt B.R."/>
            <person name="Celniker S.E."/>
            <person name="de Grey A.D.N.J."/>
            <person name="Drysdale R.A."/>
            <person name="Harris N.L."/>
            <person name="Richter J."/>
            <person name="Russo S."/>
            <person name="Schroeder A.J."/>
            <person name="Shu S.Q."/>
            <person name="Stapleton M."/>
            <person name="Yamada C."/>
            <person name="Ashburner M."/>
            <person name="Gelbart W.M."/>
            <person name="Rubin G.M."/>
            <person name="Lewis S.E."/>
        </authorList>
    </citation>
    <scope>GENOME REANNOTATION</scope>
    <source>
        <strain>Berkeley</strain>
    </source>
</reference>
<reference key="4">
    <citation type="submission" date="2003-04" db="EMBL/GenBank/DDBJ databases">
        <authorList>
            <person name="Stapleton M."/>
            <person name="Brokstein P."/>
            <person name="Hong L."/>
            <person name="Agbayani A."/>
            <person name="Carlson J.W."/>
            <person name="Champe M."/>
            <person name="Chavez C."/>
            <person name="Dorsett V."/>
            <person name="Dresnek D."/>
            <person name="Farfan D."/>
            <person name="Frise E."/>
            <person name="George R.A."/>
            <person name="Gonzalez M."/>
            <person name="Guarin H."/>
            <person name="Kronmiller B."/>
            <person name="Li P.W."/>
            <person name="Liao G."/>
            <person name="Miranda A."/>
            <person name="Mungall C.J."/>
            <person name="Nunoo J."/>
            <person name="Pacleb J.M."/>
            <person name="Paragas V."/>
            <person name="Park S."/>
            <person name="Patel S."/>
            <person name="Phouanenavong S."/>
            <person name="Wan K.H."/>
            <person name="Yu C."/>
            <person name="Lewis S.E."/>
            <person name="Rubin G.M."/>
            <person name="Celniker S.E."/>
        </authorList>
    </citation>
    <scope>NUCLEOTIDE SEQUENCE [LARGE SCALE MRNA]</scope>
    <source>
        <strain>Berkeley</strain>
        <tissue>Head</tissue>
    </source>
</reference>
<reference key="5">
    <citation type="journal article" date="2002" name="Genome Biol.">
        <title>A Drosophila full-length cDNA resource.</title>
        <authorList>
            <person name="Stapleton M."/>
            <person name="Carlson J.W."/>
            <person name="Brokstein P."/>
            <person name="Yu C."/>
            <person name="Champe M."/>
            <person name="George R.A."/>
            <person name="Guarin H."/>
            <person name="Kronmiller B."/>
            <person name="Pacleb J.M."/>
            <person name="Park S."/>
            <person name="Wan K.H."/>
            <person name="Rubin G.M."/>
            <person name="Celniker S.E."/>
        </authorList>
    </citation>
    <scope>NUCLEOTIDE SEQUENCE [LARGE SCALE MRNA] OF 596-1177</scope>
    <source>
        <strain>Berkeley</strain>
        <tissue>Head</tissue>
    </source>
</reference>
<reference key="6">
    <citation type="journal article" date="1998" name="Biochem. Biophys. Res. Commun.">
        <title>Sampling the genomic pool of protein tyrosine kinase genes using the polymerase chain reaction with genomic DNA.</title>
        <authorList>
            <person name="Oates A.C."/>
            <person name="Wollberg P."/>
            <person name="Achen M.G."/>
            <person name="Wilks A.F."/>
        </authorList>
    </citation>
    <scope>NUCLEOTIDE SEQUENCE [GENOMIC DNA] OF 1020-1075</scope>
</reference>
<reference key="7">
    <citation type="journal article" date="2008" name="J. Proteome Res.">
        <title>Phosphoproteome analysis of Drosophila melanogaster embryos.</title>
        <authorList>
            <person name="Zhai B."/>
            <person name="Villen J."/>
            <person name="Beausoleil S.A."/>
            <person name="Mintseris J."/>
            <person name="Gygi S.P."/>
        </authorList>
    </citation>
    <scope>PHOSPHORYLATION [LARGE SCALE ANALYSIS] AT SER-40 AND SER-321</scope>
    <scope>IDENTIFICATION BY MASS SPECTROMETRY</scope>
    <source>
        <tissue>Embryo</tissue>
    </source>
</reference>
<reference key="8">
    <citation type="journal article" date="2011" name="Nat. Genet.">
        <title>Drosophila Piwi functions in Hsp90-mediated suppression of phenotypic variation.</title>
        <authorList>
            <person name="Gangaraju V.K."/>
            <person name="Yin H."/>
            <person name="Weiner M.M."/>
            <person name="Wang J."/>
            <person name="Huang X.A."/>
            <person name="Lin H."/>
        </authorList>
    </citation>
    <scope>IDENTIFICATION BY MASS SPECTROMETRY</scope>
    <scope>FUNCTION</scope>
    <scope>INTERACTION WITH PIWI AND HSP83</scope>
</reference>
<gene>
    <name type="primary">hop</name>
    <name type="synonym">HD-160</name>
    <name type="ORF">CG1594</name>
</gene>
<feature type="chain" id="PRO_0000088118" description="Tyrosine-protein kinase hopscotch">
    <location>
        <begin position="1"/>
        <end position="1177"/>
    </location>
</feature>
<feature type="domain" description="FERM" evidence="2">
    <location>
        <begin position="46"/>
        <end position="414"/>
    </location>
</feature>
<feature type="domain" description="SH2; atypical">
    <location>
        <begin position="433"/>
        <end position="539"/>
    </location>
</feature>
<feature type="domain" description="Protein kinase 1" evidence="3">
    <location>
        <begin position="582"/>
        <end position="843"/>
    </location>
</feature>
<feature type="domain" description="Protein kinase 2" evidence="3">
    <location>
        <begin position="892"/>
        <end position="1164"/>
    </location>
</feature>
<feature type="region of interest" description="Disordered" evidence="5">
    <location>
        <begin position="1"/>
        <end position="41"/>
    </location>
</feature>
<feature type="region of interest" description="Disordered" evidence="5">
    <location>
        <begin position="1158"/>
        <end position="1177"/>
    </location>
</feature>
<feature type="compositionally biased region" description="Polar residues" evidence="5">
    <location>
        <begin position="16"/>
        <end position="41"/>
    </location>
</feature>
<feature type="active site" description="Proton acceptor" evidence="3 4">
    <location>
        <position position="1014"/>
    </location>
</feature>
<feature type="binding site" evidence="3">
    <location>
        <begin position="898"/>
        <end position="906"/>
    </location>
    <ligand>
        <name>ATP</name>
        <dbReference type="ChEBI" id="CHEBI:30616"/>
    </ligand>
</feature>
<feature type="binding site" evidence="3">
    <location>
        <position position="926"/>
    </location>
    <ligand>
        <name>ATP</name>
        <dbReference type="ChEBI" id="CHEBI:30616"/>
    </ligand>
</feature>
<feature type="modified residue" description="Phosphoserine" evidence="6">
    <location>
        <position position="40"/>
    </location>
</feature>
<feature type="modified residue" description="Phosphoserine" evidence="6">
    <location>
        <position position="321"/>
    </location>
</feature>
<feature type="modified residue" description="Phosphotyrosine; by autocatalysis" evidence="1">
    <location>
        <position position="1047"/>
    </location>
</feature>
<feature type="modified residue" description="Phosphotyrosine; by autocatalysis" evidence="1">
    <location>
        <position position="1048"/>
    </location>
</feature>
<feature type="sequence conflict" description="In Ref. 1; AAA62441." evidence="9" ref="1">
    <original>F</original>
    <variation>V</variation>
    <location>
        <position position="365"/>
    </location>
</feature>
<feature type="sequence conflict" description="In Ref. 1; AAA62441." evidence="9" ref="1">
    <original>G</original>
    <variation>A</variation>
    <location>
        <position position="592"/>
    </location>
</feature>